<comment type="function">
    <text evidence="1">Acts as a component of the peripheral membrane COG complex that is involved in intra-Golgi protein trafficking. COG is located at the cis-Golgi, and regulates tethering of retrograde intra-Golgi vesicles and possibly a number of other membrane trafficking events (By similarity).</text>
</comment>
<comment type="subcellular location">
    <subcellularLocation>
        <location evidence="1">Golgi apparatus membrane</location>
        <topology evidence="1">Peripheral membrane protein</topology>
    </subcellularLocation>
</comment>
<comment type="similarity">
    <text evidence="3">Belongs to the COG6 family.</text>
</comment>
<evidence type="ECO:0000250" key="1"/>
<evidence type="ECO:0000256" key="2">
    <source>
        <dbReference type="SAM" id="MobiDB-lite"/>
    </source>
</evidence>
<evidence type="ECO:0000305" key="3"/>
<dbReference type="EMBL" id="AM270115">
    <property type="protein sequence ID" value="CAK48006.1"/>
    <property type="molecule type" value="Genomic_DNA"/>
</dbReference>
<dbReference type="EnsemblFungi" id="CAK48006">
    <property type="protein sequence ID" value="CAK48006"/>
    <property type="gene ID" value="An06g01630"/>
</dbReference>
<dbReference type="HOGENOM" id="CLU_011361_1_0_1"/>
<dbReference type="Proteomes" id="UP000006706">
    <property type="component" value="Chromosome 8ER"/>
</dbReference>
<dbReference type="GO" id="GO:0000139">
    <property type="term" value="C:Golgi membrane"/>
    <property type="evidence" value="ECO:0007669"/>
    <property type="project" value="UniProtKB-SubCell"/>
</dbReference>
<dbReference type="GO" id="GO:0017119">
    <property type="term" value="C:Golgi transport complex"/>
    <property type="evidence" value="ECO:0007669"/>
    <property type="project" value="InterPro"/>
</dbReference>
<dbReference type="GO" id="GO:0006891">
    <property type="term" value="P:intra-Golgi vesicle-mediated transport"/>
    <property type="evidence" value="ECO:0007669"/>
    <property type="project" value="InterPro"/>
</dbReference>
<dbReference type="GO" id="GO:0015031">
    <property type="term" value="P:protein transport"/>
    <property type="evidence" value="ECO:0007669"/>
    <property type="project" value="UniProtKB-KW"/>
</dbReference>
<dbReference type="InterPro" id="IPR010490">
    <property type="entry name" value="COG6"/>
</dbReference>
<dbReference type="InterPro" id="IPR048369">
    <property type="entry name" value="COG6_C"/>
</dbReference>
<dbReference type="InterPro" id="IPR048368">
    <property type="entry name" value="COG6_N"/>
</dbReference>
<dbReference type="PANTHER" id="PTHR21506">
    <property type="entry name" value="COMPONENT OF OLIGOMERIC GOLGI COMPLEX 6"/>
    <property type="match status" value="1"/>
</dbReference>
<dbReference type="PANTHER" id="PTHR21506:SF0">
    <property type="entry name" value="CONSERVED OLIGOMERIC GOLGI COMPLEX SUBUNIT 6"/>
    <property type="match status" value="1"/>
</dbReference>
<dbReference type="Pfam" id="PF20653">
    <property type="entry name" value="COG6_C"/>
    <property type="match status" value="1"/>
</dbReference>
<dbReference type="Pfam" id="PF06419">
    <property type="entry name" value="COG6_N"/>
    <property type="match status" value="1"/>
</dbReference>
<dbReference type="SMART" id="SM01087">
    <property type="entry name" value="COG6"/>
    <property type="match status" value="1"/>
</dbReference>
<sequence length="716" mass="79580">MASYFPPNGVISSHGSTRASSPASSPLSPPVHQRSNALSNRLTSVLSASYADSDIRDALETLSLRGIHNTAEVRRQLRLDVQKEVVDSNAEIVRDFGLVAEQLKRIGTVITNLNQTCDEMRKHIVSARQETTPVLEEASALMKQRKEAETKQELLEAFTQHFIVPDEDLLILTHAEEPIDDHFFEILARVKQVYRDCEALLGGENERLGLELMEKSSRSLNSAYQKLYRWIQKEFRSLNLEDPRISSSIRRVLRVLAERPSLFHSCLDFFAEARDYVLSDAFHYALTDAVSGTTGDTNVKPIEFSAHDPLRYIGDMLAWVHSTTVSEREALEALFEVSFDGQKALSDLVNRDLIGVSRALRQRVELVIQGHDDPVTCYKVVNLLSFYQTTFSKLLGPQSNLAELLETLEKFTFKHFETLMHDEVNNISTDHSALTPPADLSAPQFLQDALEVLTSLMKTHEASYGADPIPTPGPKTTSSSPPPKDTNSENKFTPVLHSALEPFLDLAKSSAADLPSHTTQTIYLTNIHLTVRTTITPYPFASTTHLSPIQTALSTLRTDLLDIQYRYLLTSSGLQTLLAALEPFSPQQPTSTDQQKPKPNISDILTLPAFQPQALINISQQLDDFLPSALMDATDNLKRVASATFVKSVTEDAVEAFCRDFEFVEGMVIAADNEARGVDVGEKAVEEGGEDEEGVEKGGLRRLFPRTTGEIRVLLS</sequence>
<organism>
    <name type="scientific">Aspergillus niger (strain ATCC MYA-4892 / CBS 513.88 / FGSC A1513)</name>
    <dbReference type="NCBI Taxonomy" id="425011"/>
    <lineage>
        <taxon>Eukaryota</taxon>
        <taxon>Fungi</taxon>
        <taxon>Dikarya</taxon>
        <taxon>Ascomycota</taxon>
        <taxon>Pezizomycotina</taxon>
        <taxon>Eurotiomycetes</taxon>
        <taxon>Eurotiomycetidae</taxon>
        <taxon>Eurotiales</taxon>
        <taxon>Aspergillaceae</taxon>
        <taxon>Aspergillus</taxon>
        <taxon>Aspergillus subgen. Circumdati</taxon>
    </lineage>
</organism>
<feature type="chain" id="PRO_0000339314" description="Conserved oligomeric Golgi complex subunit 6">
    <location>
        <begin position="1"/>
        <end position="716"/>
    </location>
</feature>
<feature type="region of interest" description="Disordered" evidence="2">
    <location>
        <begin position="1"/>
        <end position="35"/>
    </location>
</feature>
<feature type="region of interest" description="Disordered" evidence="2">
    <location>
        <begin position="463"/>
        <end position="491"/>
    </location>
</feature>
<feature type="compositionally biased region" description="Low complexity" evidence="2">
    <location>
        <begin position="12"/>
        <end position="26"/>
    </location>
</feature>
<proteinExistence type="inferred from homology"/>
<reference key="1">
    <citation type="journal article" date="2007" name="Nat. Biotechnol.">
        <title>Genome sequencing and analysis of the versatile cell factory Aspergillus niger CBS 513.88.</title>
        <authorList>
            <person name="Pel H.J."/>
            <person name="de Winde J.H."/>
            <person name="Archer D.B."/>
            <person name="Dyer P.S."/>
            <person name="Hofmann G."/>
            <person name="Schaap P.J."/>
            <person name="Turner G."/>
            <person name="de Vries R.P."/>
            <person name="Albang R."/>
            <person name="Albermann K."/>
            <person name="Andersen M.R."/>
            <person name="Bendtsen J.D."/>
            <person name="Benen J.A.E."/>
            <person name="van den Berg M."/>
            <person name="Breestraat S."/>
            <person name="Caddick M.X."/>
            <person name="Contreras R."/>
            <person name="Cornell M."/>
            <person name="Coutinho P.M."/>
            <person name="Danchin E.G.J."/>
            <person name="Debets A.J.M."/>
            <person name="Dekker P."/>
            <person name="van Dijck P.W.M."/>
            <person name="van Dijk A."/>
            <person name="Dijkhuizen L."/>
            <person name="Driessen A.J.M."/>
            <person name="d'Enfert C."/>
            <person name="Geysens S."/>
            <person name="Goosen C."/>
            <person name="Groot G.S.P."/>
            <person name="de Groot P.W.J."/>
            <person name="Guillemette T."/>
            <person name="Henrissat B."/>
            <person name="Herweijer M."/>
            <person name="van den Hombergh J.P.T.W."/>
            <person name="van den Hondel C.A.M.J.J."/>
            <person name="van der Heijden R.T.J.M."/>
            <person name="van der Kaaij R.M."/>
            <person name="Klis F.M."/>
            <person name="Kools H.J."/>
            <person name="Kubicek C.P."/>
            <person name="van Kuyk P.A."/>
            <person name="Lauber J."/>
            <person name="Lu X."/>
            <person name="van der Maarel M.J.E.C."/>
            <person name="Meulenberg R."/>
            <person name="Menke H."/>
            <person name="Mortimer M.A."/>
            <person name="Nielsen J."/>
            <person name="Oliver S.G."/>
            <person name="Olsthoorn M."/>
            <person name="Pal K."/>
            <person name="van Peij N.N.M.E."/>
            <person name="Ram A.F.J."/>
            <person name="Rinas U."/>
            <person name="Roubos J.A."/>
            <person name="Sagt C.M.J."/>
            <person name="Schmoll M."/>
            <person name="Sun J."/>
            <person name="Ussery D."/>
            <person name="Varga J."/>
            <person name="Vervecken W."/>
            <person name="van de Vondervoort P.J.J."/>
            <person name="Wedler H."/>
            <person name="Woesten H.A.B."/>
            <person name="Zeng A.-P."/>
            <person name="van Ooyen A.J.J."/>
            <person name="Visser J."/>
            <person name="Stam H."/>
        </authorList>
    </citation>
    <scope>NUCLEOTIDE SEQUENCE [LARGE SCALE GENOMIC DNA]</scope>
    <source>
        <strain>ATCC MYA-4892 / CBS 513.88 / FGSC A1513</strain>
    </source>
</reference>
<gene>
    <name type="primary">cog6</name>
    <name type="ORF">An06g01630</name>
</gene>
<accession>A2QLL1</accession>
<keyword id="KW-0333">Golgi apparatus</keyword>
<keyword id="KW-0472">Membrane</keyword>
<keyword id="KW-0653">Protein transport</keyword>
<keyword id="KW-1185">Reference proteome</keyword>
<keyword id="KW-0813">Transport</keyword>
<protein>
    <recommendedName>
        <fullName>Conserved oligomeric Golgi complex subunit 6</fullName>
        <shortName>COG complex subunit 6</shortName>
    </recommendedName>
    <alternativeName>
        <fullName>Component of oligomeric Golgi complex 6</fullName>
    </alternativeName>
</protein>
<name>COG6_ASPNC</name>